<dbReference type="EMBL" id="CR954246">
    <property type="protein sequence ID" value="CAI88042.1"/>
    <property type="molecule type" value="Genomic_DNA"/>
</dbReference>
<dbReference type="SMR" id="Q3IK45"/>
<dbReference type="STRING" id="326442.PSHAa3013"/>
<dbReference type="KEGG" id="pha:PSHAa3013"/>
<dbReference type="eggNOG" id="ENOG5032S3K">
    <property type="taxonomic scope" value="Bacteria"/>
</dbReference>
<dbReference type="HOGENOM" id="CLU_148047_1_0_6"/>
<dbReference type="BioCyc" id="PHAL326442:PSHA_RS14785-MONOMER"/>
<dbReference type="Proteomes" id="UP000006843">
    <property type="component" value="Chromosome I"/>
</dbReference>
<dbReference type="GO" id="GO:0005886">
    <property type="term" value="C:plasma membrane"/>
    <property type="evidence" value="ECO:0007669"/>
    <property type="project" value="UniProtKB-SubCell"/>
</dbReference>
<dbReference type="GO" id="GO:0045259">
    <property type="term" value="C:proton-transporting ATP synthase complex"/>
    <property type="evidence" value="ECO:0007669"/>
    <property type="project" value="UniProtKB-KW"/>
</dbReference>
<dbReference type="GO" id="GO:0033177">
    <property type="term" value="C:proton-transporting two-sector ATPase complex, proton-transporting domain"/>
    <property type="evidence" value="ECO:0007669"/>
    <property type="project" value="InterPro"/>
</dbReference>
<dbReference type="GO" id="GO:0008289">
    <property type="term" value="F:lipid binding"/>
    <property type="evidence" value="ECO:0007669"/>
    <property type="project" value="UniProtKB-KW"/>
</dbReference>
<dbReference type="GO" id="GO:0046933">
    <property type="term" value="F:proton-transporting ATP synthase activity, rotational mechanism"/>
    <property type="evidence" value="ECO:0007669"/>
    <property type="project" value="UniProtKB-UniRule"/>
</dbReference>
<dbReference type="CDD" id="cd18185">
    <property type="entry name" value="ATP-synt_Fo_c_ATPE"/>
    <property type="match status" value="1"/>
</dbReference>
<dbReference type="FunFam" id="1.20.20.10:FF:000002">
    <property type="entry name" value="ATP synthase subunit c"/>
    <property type="match status" value="1"/>
</dbReference>
<dbReference type="Gene3D" id="1.20.20.10">
    <property type="entry name" value="F1F0 ATP synthase subunit C"/>
    <property type="match status" value="1"/>
</dbReference>
<dbReference type="HAMAP" id="MF_01396">
    <property type="entry name" value="ATP_synth_c_bact"/>
    <property type="match status" value="1"/>
</dbReference>
<dbReference type="InterPro" id="IPR005953">
    <property type="entry name" value="ATP_synth_csu_bac/chlpt"/>
</dbReference>
<dbReference type="InterPro" id="IPR000454">
    <property type="entry name" value="ATP_synth_F0_csu"/>
</dbReference>
<dbReference type="InterPro" id="IPR020537">
    <property type="entry name" value="ATP_synth_F0_csu_DDCD_BS"/>
</dbReference>
<dbReference type="InterPro" id="IPR038662">
    <property type="entry name" value="ATP_synth_F0_csu_sf"/>
</dbReference>
<dbReference type="InterPro" id="IPR002379">
    <property type="entry name" value="ATPase_proteolipid_c-like_dom"/>
</dbReference>
<dbReference type="InterPro" id="IPR035921">
    <property type="entry name" value="F/V-ATP_Csub_sf"/>
</dbReference>
<dbReference type="NCBIfam" id="TIGR01260">
    <property type="entry name" value="ATP_synt_c"/>
    <property type="match status" value="1"/>
</dbReference>
<dbReference type="NCBIfam" id="NF005363">
    <property type="entry name" value="PRK06876.1"/>
    <property type="match status" value="1"/>
</dbReference>
<dbReference type="Pfam" id="PF00137">
    <property type="entry name" value="ATP-synt_C"/>
    <property type="match status" value="1"/>
</dbReference>
<dbReference type="PRINTS" id="PR00124">
    <property type="entry name" value="ATPASEC"/>
</dbReference>
<dbReference type="SUPFAM" id="SSF81333">
    <property type="entry name" value="F1F0 ATP synthase subunit C"/>
    <property type="match status" value="1"/>
</dbReference>
<dbReference type="PROSITE" id="PS00605">
    <property type="entry name" value="ATPASE_C"/>
    <property type="match status" value="1"/>
</dbReference>
<evidence type="ECO:0000255" key="1">
    <source>
        <dbReference type="HAMAP-Rule" id="MF_01396"/>
    </source>
</evidence>
<proteinExistence type="inferred from homology"/>
<comment type="function">
    <text evidence="1">F(1)F(0) ATP synthase produces ATP from ADP in the presence of a proton or sodium gradient. F-type ATPases consist of two structural domains, F(1) containing the extramembraneous catalytic core and F(0) containing the membrane proton channel, linked together by a central stalk and a peripheral stalk. During catalysis, ATP synthesis in the catalytic domain of F(1) is coupled via a rotary mechanism of the central stalk subunits to proton translocation.</text>
</comment>
<comment type="function">
    <text evidence="1">Key component of the F(0) channel; it plays a direct role in translocation across the membrane. A homomeric c-ring of between 10-14 subunits forms the central stalk rotor element with the F(1) delta and epsilon subunits.</text>
</comment>
<comment type="subunit">
    <text evidence="1">F-type ATPases have 2 components, F(1) - the catalytic core - and F(0) - the membrane proton channel. F(1) has five subunits: alpha(3), beta(3), gamma(1), delta(1), epsilon(1). F(0) has three main subunits: a(1), b(2) and c(10-14). The alpha and beta chains form an alternating ring which encloses part of the gamma chain. F(1) is attached to F(0) by a central stalk formed by the gamma and epsilon chains, while a peripheral stalk is formed by the delta and b chains.</text>
</comment>
<comment type="subcellular location">
    <subcellularLocation>
        <location evidence="1">Cell inner membrane</location>
        <topology evidence="1">Multi-pass membrane protein</topology>
    </subcellularLocation>
</comment>
<comment type="similarity">
    <text evidence="1">Belongs to the ATPase C chain family.</text>
</comment>
<gene>
    <name evidence="1" type="primary">atpE</name>
    <name type="ordered locus">PSHAa3013</name>
</gene>
<keyword id="KW-0066">ATP synthesis</keyword>
<keyword id="KW-0997">Cell inner membrane</keyword>
<keyword id="KW-1003">Cell membrane</keyword>
<keyword id="KW-0138">CF(0)</keyword>
<keyword id="KW-0375">Hydrogen ion transport</keyword>
<keyword id="KW-0406">Ion transport</keyword>
<keyword id="KW-0446">Lipid-binding</keyword>
<keyword id="KW-0472">Membrane</keyword>
<keyword id="KW-1185">Reference proteome</keyword>
<keyword id="KW-0812">Transmembrane</keyword>
<keyword id="KW-1133">Transmembrane helix</keyword>
<keyword id="KW-0813">Transport</keyword>
<name>ATPL_PSET1</name>
<sequence length="77" mass="7938">MELVLGLKYIAVALLIGFGAIGTAVGFGNMGGKFLEACARQPELAPSLQVKMFILAGLIDAVAMIGVGIAMVLLFVL</sequence>
<accession>Q3IK45</accession>
<reference key="1">
    <citation type="journal article" date="2005" name="Genome Res.">
        <title>Coping with cold: the genome of the versatile marine Antarctica bacterium Pseudoalteromonas haloplanktis TAC125.</title>
        <authorList>
            <person name="Medigue C."/>
            <person name="Krin E."/>
            <person name="Pascal G."/>
            <person name="Barbe V."/>
            <person name="Bernsel A."/>
            <person name="Bertin P.N."/>
            <person name="Cheung F."/>
            <person name="Cruveiller S."/>
            <person name="D'Amico S."/>
            <person name="Duilio A."/>
            <person name="Fang G."/>
            <person name="Feller G."/>
            <person name="Ho C."/>
            <person name="Mangenot S."/>
            <person name="Marino G."/>
            <person name="Nilsson J."/>
            <person name="Parrilli E."/>
            <person name="Rocha E.P.C."/>
            <person name="Rouy Z."/>
            <person name="Sekowska A."/>
            <person name="Tutino M.L."/>
            <person name="Vallenet D."/>
            <person name="von Heijne G."/>
            <person name="Danchin A."/>
        </authorList>
    </citation>
    <scope>NUCLEOTIDE SEQUENCE [LARGE SCALE GENOMIC DNA]</scope>
    <source>
        <strain>TAC 125</strain>
    </source>
</reference>
<organism>
    <name type="scientific">Pseudoalteromonas translucida (strain TAC 125)</name>
    <dbReference type="NCBI Taxonomy" id="326442"/>
    <lineage>
        <taxon>Bacteria</taxon>
        <taxon>Pseudomonadati</taxon>
        <taxon>Pseudomonadota</taxon>
        <taxon>Gammaproteobacteria</taxon>
        <taxon>Alteromonadales</taxon>
        <taxon>Pseudoalteromonadaceae</taxon>
        <taxon>Pseudoalteromonas</taxon>
    </lineage>
</organism>
<feature type="chain" id="PRO_1000184441" description="ATP synthase subunit c">
    <location>
        <begin position="1"/>
        <end position="77"/>
    </location>
</feature>
<feature type="transmembrane region" description="Helical" evidence="1">
    <location>
        <begin position="10"/>
        <end position="30"/>
    </location>
</feature>
<feature type="transmembrane region" description="Helical" evidence="1">
    <location>
        <begin position="57"/>
        <end position="77"/>
    </location>
</feature>
<feature type="site" description="Reversibly protonated during proton transport" evidence="1">
    <location>
        <position position="60"/>
    </location>
</feature>
<protein>
    <recommendedName>
        <fullName evidence="1">ATP synthase subunit c</fullName>
    </recommendedName>
    <alternativeName>
        <fullName evidence="1">ATP synthase F(0) sector subunit c</fullName>
    </alternativeName>
    <alternativeName>
        <fullName evidence="1">F-type ATPase subunit c</fullName>
        <shortName evidence="1">F-ATPase subunit c</shortName>
    </alternativeName>
    <alternativeName>
        <fullName evidence="1">Lipid-binding protein</fullName>
    </alternativeName>
</protein>